<reference key="1">
    <citation type="journal article" date="2000" name="Gene">
        <title>cDNA cloning, chromosomal localization, and expression analysis of human BEHAB/brevican, a brain specific proteoglycan regulated during cortical development and in glioma.</title>
        <authorList>
            <person name="Gary S.C."/>
            <person name="Zerillo C.A."/>
            <person name="Chiang V.L."/>
            <person name="Gaw J.U."/>
            <person name="Gray G."/>
            <person name="Hockfield S."/>
        </authorList>
    </citation>
    <scope>NUCLEOTIDE SEQUENCE [MRNA] (ISOFORMS 1 AND 2)</scope>
    <scope>DEVELOPMENTAL STAGE</scope>
    <source>
        <tissue>Brain cortex</tissue>
    </source>
</reference>
<reference key="2">
    <citation type="journal article" date="2003" name="Genome Res.">
        <title>The secreted protein discovery initiative (SPDI), a large-scale effort to identify novel human secreted and transmembrane proteins: a bioinformatics assessment.</title>
        <authorList>
            <person name="Clark H.F."/>
            <person name="Gurney A.L."/>
            <person name="Abaya E."/>
            <person name="Baker K."/>
            <person name="Baldwin D.T."/>
            <person name="Brush J."/>
            <person name="Chen J."/>
            <person name="Chow B."/>
            <person name="Chui C."/>
            <person name="Crowley C."/>
            <person name="Currell B."/>
            <person name="Deuel B."/>
            <person name="Dowd P."/>
            <person name="Eaton D."/>
            <person name="Foster J.S."/>
            <person name="Grimaldi C."/>
            <person name="Gu Q."/>
            <person name="Hass P.E."/>
            <person name="Heldens S."/>
            <person name="Huang A."/>
            <person name="Kim H.S."/>
            <person name="Klimowski L."/>
            <person name="Jin Y."/>
            <person name="Johnson S."/>
            <person name="Lee J."/>
            <person name="Lewis L."/>
            <person name="Liao D."/>
            <person name="Mark M.R."/>
            <person name="Robbie E."/>
            <person name="Sanchez C."/>
            <person name="Schoenfeld J."/>
            <person name="Seshagiri S."/>
            <person name="Simmons L."/>
            <person name="Singh J."/>
            <person name="Smith V."/>
            <person name="Stinson J."/>
            <person name="Vagts A."/>
            <person name="Vandlen R.L."/>
            <person name="Watanabe C."/>
            <person name="Wieand D."/>
            <person name="Woods K."/>
            <person name="Xie M.-H."/>
            <person name="Yansura D.G."/>
            <person name="Yi S."/>
            <person name="Yu G."/>
            <person name="Yuan J."/>
            <person name="Zhang M."/>
            <person name="Zhang Z."/>
            <person name="Goddard A.D."/>
            <person name="Wood W.I."/>
            <person name="Godowski P.J."/>
            <person name="Gray A.M."/>
        </authorList>
    </citation>
    <scope>NUCLEOTIDE SEQUENCE [LARGE SCALE MRNA] (ISOFORM 1)</scope>
    <scope>VARIANT LYS-504</scope>
</reference>
<reference key="3">
    <citation type="journal article" date="2006" name="Nature">
        <title>The DNA sequence and biological annotation of human chromosome 1.</title>
        <authorList>
            <person name="Gregory S.G."/>
            <person name="Barlow K.F."/>
            <person name="McLay K.E."/>
            <person name="Kaul R."/>
            <person name="Swarbreck D."/>
            <person name="Dunham A."/>
            <person name="Scott C.E."/>
            <person name="Howe K.L."/>
            <person name="Woodfine K."/>
            <person name="Spencer C.C.A."/>
            <person name="Jones M.C."/>
            <person name="Gillson C."/>
            <person name="Searle S."/>
            <person name="Zhou Y."/>
            <person name="Kokocinski F."/>
            <person name="McDonald L."/>
            <person name="Evans R."/>
            <person name="Phillips K."/>
            <person name="Atkinson A."/>
            <person name="Cooper R."/>
            <person name="Jones C."/>
            <person name="Hall R.E."/>
            <person name="Andrews T.D."/>
            <person name="Lloyd C."/>
            <person name="Ainscough R."/>
            <person name="Almeida J.P."/>
            <person name="Ambrose K.D."/>
            <person name="Anderson F."/>
            <person name="Andrew R.W."/>
            <person name="Ashwell R.I.S."/>
            <person name="Aubin K."/>
            <person name="Babbage A.K."/>
            <person name="Bagguley C.L."/>
            <person name="Bailey J."/>
            <person name="Beasley H."/>
            <person name="Bethel G."/>
            <person name="Bird C.P."/>
            <person name="Bray-Allen S."/>
            <person name="Brown J.Y."/>
            <person name="Brown A.J."/>
            <person name="Buckley D."/>
            <person name="Burton J."/>
            <person name="Bye J."/>
            <person name="Carder C."/>
            <person name="Chapman J.C."/>
            <person name="Clark S.Y."/>
            <person name="Clarke G."/>
            <person name="Clee C."/>
            <person name="Cobley V."/>
            <person name="Collier R.E."/>
            <person name="Corby N."/>
            <person name="Coville G.J."/>
            <person name="Davies J."/>
            <person name="Deadman R."/>
            <person name="Dunn M."/>
            <person name="Earthrowl M."/>
            <person name="Ellington A.G."/>
            <person name="Errington H."/>
            <person name="Frankish A."/>
            <person name="Frankland J."/>
            <person name="French L."/>
            <person name="Garner P."/>
            <person name="Garnett J."/>
            <person name="Gay L."/>
            <person name="Ghori M.R.J."/>
            <person name="Gibson R."/>
            <person name="Gilby L.M."/>
            <person name="Gillett W."/>
            <person name="Glithero R.J."/>
            <person name="Grafham D.V."/>
            <person name="Griffiths C."/>
            <person name="Griffiths-Jones S."/>
            <person name="Grocock R."/>
            <person name="Hammond S."/>
            <person name="Harrison E.S.I."/>
            <person name="Hart E."/>
            <person name="Haugen E."/>
            <person name="Heath P.D."/>
            <person name="Holmes S."/>
            <person name="Holt K."/>
            <person name="Howden P.J."/>
            <person name="Hunt A.R."/>
            <person name="Hunt S.E."/>
            <person name="Hunter G."/>
            <person name="Isherwood J."/>
            <person name="James R."/>
            <person name="Johnson C."/>
            <person name="Johnson D."/>
            <person name="Joy A."/>
            <person name="Kay M."/>
            <person name="Kershaw J.K."/>
            <person name="Kibukawa M."/>
            <person name="Kimberley A.M."/>
            <person name="King A."/>
            <person name="Knights A.J."/>
            <person name="Lad H."/>
            <person name="Laird G."/>
            <person name="Lawlor S."/>
            <person name="Leongamornlert D.A."/>
            <person name="Lloyd D.M."/>
            <person name="Loveland J."/>
            <person name="Lovell J."/>
            <person name="Lush M.J."/>
            <person name="Lyne R."/>
            <person name="Martin S."/>
            <person name="Mashreghi-Mohammadi M."/>
            <person name="Matthews L."/>
            <person name="Matthews N.S.W."/>
            <person name="McLaren S."/>
            <person name="Milne S."/>
            <person name="Mistry S."/>
            <person name="Moore M.J.F."/>
            <person name="Nickerson T."/>
            <person name="O'Dell C.N."/>
            <person name="Oliver K."/>
            <person name="Palmeiri A."/>
            <person name="Palmer S.A."/>
            <person name="Parker A."/>
            <person name="Patel D."/>
            <person name="Pearce A.V."/>
            <person name="Peck A.I."/>
            <person name="Pelan S."/>
            <person name="Phelps K."/>
            <person name="Phillimore B.J."/>
            <person name="Plumb R."/>
            <person name="Rajan J."/>
            <person name="Raymond C."/>
            <person name="Rouse G."/>
            <person name="Saenphimmachak C."/>
            <person name="Sehra H.K."/>
            <person name="Sheridan E."/>
            <person name="Shownkeen R."/>
            <person name="Sims S."/>
            <person name="Skuce C.D."/>
            <person name="Smith M."/>
            <person name="Steward C."/>
            <person name="Subramanian S."/>
            <person name="Sycamore N."/>
            <person name="Tracey A."/>
            <person name="Tromans A."/>
            <person name="Van Helmond Z."/>
            <person name="Wall M."/>
            <person name="Wallis J.M."/>
            <person name="White S."/>
            <person name="Whitehead S.L."/>
            <person name="Wilkinson J.E."/>
            <person name="Willey D.L."/>
            <person name="Williams H."/>
            <person name="Wilming L."/>
            <person name="Wray P.W."/>
            <person name="Wu Z."/>
            <person name="Coulson A."/>
            <person name="Vaudin M."/>
            <person name="Sulston J.E."/>
            <person name="Durbin R.M."/>
            <person name="Hubbard T."/>
            <person name="Wooster R."/>
            <person name="Dunham I."/>
            <person name="Carter N.P."/>
            <person name="McVean G."/>
            <person name="Ross M.T."/>
            <person name="Harrow J."/>
            <person name="Olson M.V."/>
            <person name="Beck S."/>
            <person name="Rogers J."/>
            <person name="Bentley D.R."/>
        </authorList>
    </citation>
    <scope>NUCLEOTIDE SEQUENCE [LARGE SCALE GENOMIC DNA]</scope>
</reference>
<reference key="4">
    <citation type="submission" date="2005-09" db="EMBL/GenBank/DDBJ databases">
        <authorList>
            <person name="Mural R.J."/>
            <person name="Istrail S."/>
            <person name="Sutton G.G."/>
            <person name="Florea L."/>
            <person name="Halpern A.L."/>
            <person name="Mobarry C.M."/>
            <person name="Lippert R."/>
            <person name="Walenz B."/>
            <person name="Shatkay H."/>
            <person name="Dew I."/>
            <person name="Miller J.R."/>
            <person name="Flanigan M.J."/>
            <person name="Edwards N.J."/>
            <person name="Bolanos R."/>
            <person name="Fasulo D."/>
            <person name="Halldorsson B.V."/>
            <person name="Hannenhalli S."/>
            <person name="Turner R."/>
            <person name="Yooseph S."/>
            <person name="Lu F."/>
            <person name="Nusskern D.R."/>
            <person name="Shue B.C."/>
            <person name="Zheng X.H."/>
            <person name="Zhong F."/>
            <person name="Delcher A.L."/>
            <person name="Huson D.H."/>
            <person name="Kravitz S.A."/>
            <person name="Mouchard L."/>
            <person name="Reinert K."/>
            <person name="Remington K.A."/>
            <person name="Clark A.G."/>
            <person name="Waterman M.S."/>
            <person name="Eichler E.E."/>
            <person name="Adams M.D."/>
            <person name="Hunkapiller M.W."/>
            <person name="Myers E.W."/>
            <person name="Venter J.C."/>
        </authorList>
    </citation>
    <scope>NUCLEOTIDE SEQUENCE [LARGE SCALE GENOMIC DNA]</scope>
</reference>
<reference key="5">
    <citation type="journal article" date="2004" name="Genome Res.">
        <title>The status, quality, and expansion of the NIH full-length cDNA project: the Mammalian Gene Collection (MGC).</title>
        <authorList>
            <consortium name="The MGC Project Team"/>
        </authorList>
    </citation>
    <scope>NUCLEOTIDE SEQUENCE [LARGE SCALE MRNA] (ISOFORM 1)</scope>
    <source>
        <tissue>Brain</tissue>
    </source>
</reference>
<reference key="6">
    <citation type="journal article" date="2009" name="Nat. Methods">
        <title>Enrichment of glycopeptides for glycan structure and attachment site identification.</title>
        <authorList>
            <person name="Nilsson J."/>
            <person name="Rueetschi U."/>
            <person name="Halim A."/>
            <person name="Hesse C."/>
            <person name="Carlsohn E."/>
            <person name="Brinkmalm G."/>
            <person name="Larson G."/>
        </authorList>
    </citation>
    <scope>GLYCOSYLATION [LARGE SCALE ANALYSIS] AT SER-905 AND SER-906</scope>
    <scope>STRUCTURE OF CARBOHYDRATES</scope>
    <source>
        <tissue>Cerebrospinal fluid</tissue>
    </source>
</reference>
<reference key="7">
    <citation type="journal article" date="2015" name="Mol. Cell. Proteomics">
        <title>Identification of chondroitin sulfate linkage region glycopeptides reveals prohormones as a novel class of proteoglycans.</title>
        <authorList>
            <person name="Noborn F."/>
            <person name="Gomez Toledo A."/>
            <person name="Sihlbom C."/>
            <person name="Lengqvist J."/>
            <person name="Fries E."/>
            <person name="Kjellen L."/>
            <person name="Nilsson J."/>
            <person name="Larson G."/>
        </authorList>
    </citation>
    <scope>SUBCELLULAR LOCATION</scope>
    <scope>TISSUE SPECIFICITY</scope>
    <scope>GLYCOSYLATION AT SER-418</scope>
</reference>
<reference key="8">
    <citation type="journal article" date="2018" name="Acta Biomater.">
        <title>Extracellular matrix component expression in human pluripotent stem cell-derived retinal organoids recapitulates retinogenesis in vivo and reveals an important role for IMPG1 and CD44 in the development of photoreceptors and interphotoreceptor matrix.</title>
        <authorList>
            <person name="Felemban M."/>
            <person name="Dorgau B."/>
            <person name="Hunt N.C."/>
            <person name="Hallam D."/>
            <person name="Zerti D."/>
            <person name="Bauer R."/>
            <person name="Ding Y."/>
            <person name="Collin J."/>
            <person name="Steel D."/>
            <person name="Krasnogor N."/>
            <person name="Al-Aama J."/>
            <person name="Lindsay S."/>
            <person name="Mellough C."/>
            <person name="Lako M."/>
        </authorList>
    </citation>
    <scope>TISSUE SPECIFICITY</scope>
    <scope>DEVELOPMENTAL STAGE</scope>
</reference>
<reference key="9">
    <citation type="journal article" date="2023" name="Mol. Cell. Proteomics">
        <title>Mapping the Human Chondroitin Sulfate Glycoproteome Reveals an Unexpected Correlation Between Glycan Sulfation and Attachment Site Characteristics.</title>
        <authorList>
            <person name="Noborn F."/>
            <person name="Nilsson J."/>
            <person name="Sihlbom C."/>
            <person name="Nikpour M."/>
            <person name="Kjellen L."/>
            <person name="Larson G."/>
        </authorList>
    </citation>
    <scope>SUBCELLULAR LOCATION</scope>
    <scope>TISSUE SPECIFICITY</scope>
    <scope>GLYCOSYLATION AT SER-418</scope>
</reference>
<evidence type="ECO:0000250" key="1"/>
<evidence type="ECO:0000250" key="2">
    <source>
        <dbReference type="UniProtKB" id="P55068"/>
    </source>
</evidence>
<evidence type="ECO:0000255" key="3"/>
<evidence type="ECO:0000255" key="4">
    <source>
        <dbReference type="PROSITE-ProRule" id="PRU00040"/>
    </source>
</evidence>
<evidence type="ECO:0000255" key="5">
    <source>
        <dbReference type="PROSITE-ProRule" id="PRU00076"/>
    </source>
</evidence>
<evidence type="ECO:0000255" key="6">
    <source>
        <dbReference type="PROSITE-ProRule" id="PRU00302"/>
    </source>
</evidence>
<evidence type="ECO:0000255" key="7">
    <source>
        <dbReference type="PROSITE-ProRule" id="PRU00323"/>
    </source>
</evidence>
<evidence type="ECO:0000256" key="8">
    <source>
        <dbReference type="SAM" id="MobiDB-lite"/>
    </source>
</evidence>
<evidence type="ECO:0000269" key="9">
    <source>
    </source>
</evidence>
<evidence type="ECO:0000269" key="10">
    <source>
    </source>
</evidence>
<evidence type="ECO:0000269" key="11">
    <source>
    </source>
</evidence>
<evidence type="ECO:0000269" key="12">
    <source>
    </source>
</evidence>
<evidence type="ECO:0000269" key="13">
    <source>
    </source>
</evidence>
<evidence type="ECO:0000269" key="14">
    <source>
    </source>
</evidence>
<evidence type="ECO:0000303" key="15">
    <source>
    </source>
</evidence>
<evidence type="ECO:0000305" key="16"/>
<evidence type="ECO:0000305" key="17">
    <source>
    </source>
</evidence>
<dbReference type="EMBL" id="AF228710">
    <property type="protein sequence ID" value="AAG23134.1"/>
    <property type="molecule type" value="mRNA"/>
</dbReference>
<dbReference type="EMBL" id="AF229053">
    <property type="protein sequence ID" value="AAG23135.1"/>
    <property type="molecule type" value="mRNA"/>
</dbReference>
<dbReference type="EMBL" id="AY358372">
    <property type="protein sequence ID" value="AAQ88738.1"/>
    <property type="molecule type" value="mRNA"/>
</dbReference>
<dbReference type="EMBL" id="AL365181">
    <property type="status" value="NOT_ANNOTATED_CDS"/>
    <property type="molecule type" value="Genomic_DNA"/>
</dbReference>
<dbReference type="EMBL" id="AL590666">
    <property type="status" value="NOT_ANNOTATED_CDS"/>
    <property type="molecule type" value="Genomic_DNA"/>
</dbReference>
<dbReference type="EMBL" id="CH471121">
    <property type="protein sequence ID" value="EAW52927.1"/>
    <property type="molecule type" value="Genomic_DNA"/>
</dbReference>
<dbReference type="EMBL" id="CH471121">
    <property type="protein sequence ID" value="EAW52928.1"/>
    <property type="molecule type" value="Genomic_DNA"/>
</dbReference>
<dbReference type="EMBL" id="CH471121">
    <property type="protein sequence ID" value="EAW52929.1"/>
    <property type="molecule type" value="Genomic_DNA"/>
</dbReference>
<dbReference type="EMBL" id="CH471121">
    <property type="protein sequence ID" value="EAW52930.1"/>
    <property type="molecule type" value="Genomic_DNA"/>
</dbReference>
<dbReference type="EMBL" id="BC009117">
    <property type="protein sequence ID" value="AAH09117.1"/>
    <property type="molecule type" value="mRNA"/>
</dbReference>
<dbReference type="EMBL" id="BC022938">
    <property type="protein sequence ID" value="AAH22938.1"/>
    <property type="molecule type" value="mRNA"/>
</dbReference>
<dbReference type="EMBL" id="BC027971">
    <property type="protein sequence ID" value="AAH27971.1"/>
    <property type="molecule type" value="mRNA"/>
</dbReference>
<dbReference type="CCDS" id="CCDS1149.1">
    <molecule id="Q96GW7-1"/>
</dbReference>
<dbReference type="CCDS" id="CCDS1150.1">
    <molecule id="Q96GW7-2"/>
</dbReference>
<dbReference type="RefSeq" id="NP_068767.3">
    <molecule id="Q96GW7-1"/>
    <property type="nucleotide sequence ID" value="NM_021948.4"/>
</dbReference>
<dbReference type="RefSeq" id="NP_940819.1">
    <molecule id="Q96GW7-2"/>
    <property type="nucleotide sequence ID" value="NM_198427.2"/>
</dbReference>
<dbReference type="RefSeq" id="XP_011508168.1">
    <molecule id="Q96GW7-1"/>
    <property type="nucleotide sequence ID" value="XM_011509866.1"/>
</dbReference>
<dbReference type="SMR" id="Q96GW7"/>
<dbReference type="BioGRID" id="121964">
    <property type="interactions" value="43"/>
</dbReference>
<dbReference type="FunCoup" id="Q96GW7">
    <property type="interactions" value="170"/>
</dbReference>
<dbReference type="IntAct" id="Q96GW7">
    <property type="interactions" value="28"/>
</dbReference>
<dbReference type="STRING" id="9606.ENSP00000331210"/>
<dbReference type="GlyCosmos" id="Q96GW7">
    <property type="glycosylation" value="7 sites, 2 glycans"/>
</dbReference>
<dbReference type="GlyGen" id="Q96GW7">
    <property type="glycosylation" value="11 sites, 5 N-linked glycans (2 sites), 3 O-linked glycans (6 sites)"/>
</dbReference>
<dbReference type="iPTMnet" id="Q96GW7"/>
<dbReference type="PhosphoSitePlus" id="Q96GW7"/>
<dbReference type="BioMuta" id="BCAN"/>
<dbReference type="DMDM" id="68067899"/>
<dbReference type="jPOST" id="Q96GW7"/>
<dbReference type="MassIVE" id="Q96GW7"/>
<dbReference type="PaxDb" id="9606-ENSP00000331210"/>
<dbReference type="PeptideAtlas" id="Q96GW7"/>
<dbReference type="ProteomicsDB" id="76671">
    <molecule id="Q96GW7-1"/>
</dbReference>
<dbReference type="ProteomicsDB" id="76672">
    <molecule id="Q96GW7-2"/>
</dbReference>
<dbReference type="TopDownProteomics" id="Q96GW7-2">
    <molecule id="Q96GW7-2"/>
</dbReference>
<dbReference type="ABCD" id="Q96GW7">
    <property type="antibodies" value="4 sequenced antibodies"/>
</dbReference>
<dbReference type="Antibodypedia" id="2188">
    <property type="antibodies" value="203 antibodies from 29 providers"/>
</dbReference>
<dbReference type="DNASU" id="63827"/>
<dbReference type="Ensembl" id="ENST00000329117.10">
    <molecule id="Q96GW7-1"/>
    <property type="protein sequence ID" value="ENSP00000331210.4"/>
    <property type="gene ID" value="ENSG00000132692.19"/>
</dbReference>
<dbReference type="Ensembl" id="ENST00000361588.5">
    <molecule id="Q96GW7-2"/>
    <property type="protein sequence ID" value="ENSP00000354925.5"/>
    <property type="gene ID" value="ENSG00000132692.19"/>
</dbReference>
<dbReference type="GeneID" id="63827"/>
<dbReference type="KEGG" id="hsa:63827"/>
<dbReference type="MANE-Select" id="ENST00000329117.10">
    <property type="protein sequence ID" value="ENSP00000331210.4"/>
    <property type="RefSeq nucleotide sequence ID" value="NM_021948.5"/>
    <property type="RefSeq protein sequence ID" value="NP_068767.3"/>
</dbReference>
<dbReference type="UCSC" id="uc001fpo.4">
    <molecule id="Q96GW7-1"/>
    <property type="organism name" value="human"/>
</dbReference>
<dbReference type="AGR" id="HGNC:23059"/>
<dbReference type="CTD" id="63827"/>
<dbReference type="DisGeNET" id="63827"/>
<dbReference type="GeneCards" id="BCAN"/>
<dbReference type="HGNC" id="HGNC:23059">
    <property type="gene designation" value="BCAN"/>
</dbReference>
<dbReference type="HPA" id="ENSG00000132692">
    <property type="expression patterns" value="Tissue enriched (brain)"/>
</dbReference>
<dbReference type="MIM" id="600347">
    <property type="type" value="gene"/>
</dbReference>
<dbReference type="neXtProt" id="NX_Q96GW7"/>
<dbReference type="OpenTargets" id="ENSG00000132692"/>
<dbReference type="PharmGKB" id="PA134868393"/>
<dbReference type="VEuPathDB" id="HostDB:ENSG00000132692"/>
<dbReference type="eggNOG" id="KOG4297">
    <property type="taxonomic scope" value="Eukaryota"/>
</dbReference>
<dbReference type="GeneTree" id="ENSGT00940000157343"/>
<dbReference type="HOGENOM" id="CLU_000303_0_0_1"/>
<dbReference type="InParanoid" id="Q96GW7"/>
<dbReference type="OMA" id="RWEAPQI"/>
<dbReference type="OrthoDB" id="5860362at2759"/>
<dbReference type="PAN-GO" id="Q96GW7">
    <property type="GO annotations" value="3 GO annotations based on evolutionary models"/>
</dbReference>
<dbReference type="PhylomeDB" id="Q96GW7"/>
<dbReference type="TreeFam" id="TF332134"/>
<dbReference type="PathwayCommons" id="Q96GW7"/>
<dbReference type="Reactome" id="R-HSA-1474228">
    <property type="pathway name" value="Degradation of the extracellular matrix"/>
</dbReference>
<dbReference type="Reactome" id="R-HSA-1971475">
    <property type="pathway name" value="A tetrasaccharide linker sequence is required for GAG synthesis"/>
</dbReference>
<dbReference type="Reactome" id="R-HSA-2022870">
    <property type="pathway name" value="Chondroitin sulfate biosynthesis"/>
</dbReference>
<dbReference type="Reactome" id="R-HSA-2022923">
    <property type="pathway name" value="Dermatan sulfate biosynthesis"/>
</dbReference>
<dbReference type="Reactome" id="R-HSA-2024101">
    <property type="pathway name" value="CS/DS degradation"/>
</dbReference>
<dbReference type="Reactome" id="R-HSA-3000178">
    <property type="pathway name" value="ECM proteoglycans"/>
</dbReference>
<dbReference type="Reactome" id="R-HSA-3560783">
    <property type="pathway name" value="Defective B4GALT7 causes EDS, progeroid type"/>
</dbReference>
<dbReference type="Reactome" id="R-HSA-3560801">
    <property type="pathway name" value="Defective B3GAT3 causes JDSSDHD"/>
</dbReference>
<dbReference type="Reactome" id="R-HSA-3595172">
    <property type="pathway name" value="Defective CHST3 causes SEDCJD"/>
</dbReference>
<dbReference type="Reactome" id="R-HSA-3595174">
    <property type="pathway name" value="Defective CHST14 causes EDS, musculocontractural type"/>
</dbReference>
<dbReference type="Reactome" id="R-HSA-3595177">
    <property type="pathway name" value="Defective CHSY1 causes TPBS"/>
</dbReference>
<dbReference type="Reactome" id="R-HSA-4420332">
    <property type="pathway name" value="Defective B3GALT6 causes EDSP2 and SEMDJL1"/>
</dbReference>
<dbReference type="SignaLink" id="Q96GW7"/>
<dbReference type="BioGRID-ORCS" id="63827">
    <property type="hits" value="62 hits in 1157 CRISPR screens"/>
</dbReference>
<dbReference type="CD-CODE" id="FB4E32DD">
    <property type="entry name" value="Presynaptic clusters and postsynaptic densities"/>
</dbReference>
<dbReference type="ChiTaRS" id="BCAN">
    <property type="organism name" value="human"/>
</dbReference>
<dbReference type="GeneWiki" id="Brevican"/>
<dbReference type="GenomeRNAi" id="63827"/>
<dbReference type="Pharos" id="Q96GW7">
    <property type="development level" value="Tbio"/>
</dbReference>
<dbReference type="PRO" id="PR:Q96GW7"/>
<dbReference type="Proteomes" id="UP000005640">
    <property type="component" value="Chromosome 1"/>
</dbReference>
<dbReference type="RNAct" id="Q96GW7">
    <property type="molecule type" value="protein"/>
</dbReference>
<dbReference type="Bgee" id="ENSG00000132692">
    <property type="expression patterns" value="Expressed in ventricular zone and 160 other cell types or tissues"/>
</dbReference>
<dbReference type="ExpressionAtlas" id="Q96GW7">
    <property type="expression patterns" value="baseline and differential"/>
</dbReference>
<dbReference type="GO" id="GO:0005576">
    <property type="term" value="C:extracellular region"/>
    <property type="evidence" value="ECO:0000304"/>
    <property type="project" value="Reactome"/>
</dbReference>
<dbReference type="GO" id="GO:0005615">
    <property type="term" value="C:extracellular space"/>
    <property type="evidence" value="ECO:0000318"/>
    <property type="project" value="GO_Central"/>
</dbReference>
<dbReference type="GO" id="GO:0098978">
    <property type="term" value="C:glutamatergic synapse"/>
    <property type="evidence" value="ECO:0007669"/>
    <property type="project" value="Ensembl"/>
</dbReference>
<dbReference type="GO" id="GO:0005796">
    <property type="term" value="C:Golgi lumen"/>
    <property type="evidence" value="ECO:0000304"/>
    <property type="project" value="Reactome"/>
</dbReference>
<dbReference type="GO" id="GO:0043202">
    <property type="term" value="C:lysosomal lumen"/>
    <property type="evidence" value="ECO:0000304"/>
    <property type="project" value="Reactome"/>
</dbReference>
<dbReference type="GO" id="GO:0072534">
    <property type="term" value="C:perineuronal net"/>
    <property type="evidence" value="ECO:0000318"/>
    <property type="project" value="GO_Central"/>
</dbReference>
<dbReference type="GO" id="GO:0098552">
    <property type="term" value="C:side of membrane"/>
    <property type="evidence" value="ECO:0007669"/>
    <property type="project" value="UniProtKB-KW"/>
</dbReference>
<dbReference type="GO" id="GO:0045202">
    <property type="term" value="C:synapse"/>
    <property type="evidence" value="ECO:0000318"/>
    <property type="project" value="GO_Central"/>
</dbReference>
<dbReference type="GO" id="GO:0030246">
    <property type="term" value="F:carbohydrate binding"/>
    <property type="evidence" value="ECO:0007669"/>
    <property type="project" value="UniProtKB-KW"/>
</dbReference>
<dbReference type="GO" id="GO:0005540">
    <property type="term" value="F:hyaluronic acid binding"/>
    <property type="evidence" value="ECO:0007669"/>
    <property type="project" value="UniProtKB-KW"/>
</dbReference>
<dbReference type="GO" id="GO:0007155">
    <property type="term" value="P:cell adhesion"/>
    <property type="evidence" value="ECO:0007669"/>
    <property type="project" value="InterPro"/>
</dbReference>
<dbReference type="GO" id="GO:0007417">
    <property type="term" value="P:central nervous system development"/>
    <property type="evidence" value="ECO:0000318"/>
    <property type="project" value="GO_Central"/>
</dbReference>
<dbReference type="GO" id="GO:0021766">
    <property type="term" value="P:hippocampus development"/>
    <property type="evidence" value="ECO:0007669"/>
    <property type="project" value="Ensembl"/>
</dbReference>
<dbReference type="GO" id="GO:0001501">
    <property type="term" value="P:skeletal system development"/>
    <property type="evidence" value="ECO:0000318"/>
    <property type="project" value="GO_Central"/>
</dbReference>
<dbReference type="GO" id="GO:0060074">
    <property type="term" value="P:synapse maturation"/>
    <property type="evidence" value="ECO:0007669"/>
    <property type="project" value="Ensembl"/>
</dbReference>
<dbReference type="CDD" id="cd00033">
    <property type="entry name" value="CCP"/>
    <property type="match status" value="1"/>
</dbReference>
<dbReference type="CDD" id="cd00054">
    <property type="entry name" value="EGF_CA"/>
    <property type="match status" value="1"/>
</dbReference>
<dbReference type="CDD" id="cd03517">
    <property type="entry name" value="Link_domain_CSPGs_modules_1_3"/>
    <property type="match status" value="1"/>
</dbReference>
<dbReference type="CDD" id="cd03520">
    <property type="entry name" value="Link_domain_CSPGs_modules_2_4"/>
    <property type="match status" value="1"/>
</dbReference>
<dbReference type="FunFam" id="3.10.100.10:FF:000011">
    <property type="entry name" value="Aggrecan core protein"/>
    <property type="match status" value="1"/>
</dbReference>
<dbReference type="FunFam" id="2.60.40.10:FF:000698">
    <property type="entry name" value="brevican core protein"/>
    <property type="match status" value="1"/>
</dbReference>
<dbReference type="FunFam" id="2.10.25.10:FF:000012">
    <property type="entry name" value="Delta-like protein"/>
    <property type="match status" value="1"/>
</dbReference>
<dbReference type="FunFam" id="3.10.100.10:FF:000002">
    <property type="entry name" value="Hyaluronan proteoglycan link protein 1"/>
    <property type="match status" value="1"/>
</dbReference>
<dbReference type="FunFam" id="2.10.70.10:FF:000003">
    <property type="entry name" value="Versican core protein"/>
    <property type="match status" value="1"/>
</dbReference>
<dbReference type="FunFam" id="3.10.100.10:FF:000003">
    <property type="entry name" value="Versican core protein"/>
    <property type="match status" value="1"/>
</dbReference>
<dbReference type="Gene3D" id="2.10.70.10">
    <property type="entry name" value="Complement Module, domain 1"/>
    <property type="match status" value="1"/>
</dbReference>
<dbReference type="Gene3D" id="2.60.40.10">
    <property type="entry name" value="Immunoglobulins"/>
    <property type="match status" value="1"/>
</dbReference>
<dbReference type="Gene3D" id="2.10.25.10">
    <property type="entry name" value="Laminin"/>
    <property type="match status" value="1"/>
</dbReference>
<dbReference type="Gene3D" id="3.10.100.10">
    <property type="entry name" value="Mannose-Binding Protein A, subunit A"/>
    <property type="match status" value="3"/>
</dbReference>
<dbReference type="InterPro" id="IPR001304">
    <property type="entry name" value="C-type_lectin-like"/>
</dbReference>
<dbReference type="InterPro" id="IPR016186">
    <property type="entry name" value="C-type_lectin-like/link_sf"/>
</dbReference>
<dbReference type="InterPro" id="IPR018378">
    <property type="entry name" value="C-type_lectin_CS"/>
</dbReference>
<dbReference type="InterPro" id="IPR016187">
    <property type="entry name" value="CTDL_fold"/>
</dbReference>
<dbReference type="InterPro" id="IPR000742">
    <property type="entry name" value="EGF-like_dom"/>
</dbReference>
<dbReference type="InterPro" id="IPR050691">
    <property type="entry name" value="Hyaluronan_bind_Proteoglycan"/>
</dbReference>
<dbReference type="InterPro" id="IPR007110">
    <property type="entry name" value="Ig-like_dom"/>
</dbReference>
<dbReference type="InterPro" id="IPR036179">
    <property type="entry name" value="Ig-like_dom_sf"/>
</dbReference>
<dbReference type="InterPro" id="IPR013783">
    <property type="entry name" value="Ig-like_fold"/>
</dbReference>
<dbReference type="InterPro" id="IPR003006">
    <property type="entry name" value="Ig/MHC_CS"/>
</dbReference>
<dbReference type="InterPro" id="IPR003599">
    <property type="entry name" value="Ig_sub"/>
</dbReference>
<dbReference type="InterPro" id="IPR013106">
    <property type="entry name" value="Ig_V-set"/>
</dbReference>
<dbReference type="InterPro" id="IPR000538">
    <property type="entry name" value="Link_dom"/>
</dbReference>
<dbReference type="InterPro" id="IPR035976">
    <property type="entry name" value="Sushi/SCR/CCP_sf"/>
</dbReference>
<dbReference type="InterPro" id="IPR000436">
    <property type="entry name" value="Sushi_SCR_CCP_dom"/>
</dbReference>
<dbReference type="PANTHER" id="PTHR22804">
    <property type="entry name" value="AGGRECAN/VERSICAN PROTEOGLYCAN"/>
    <property type="match status" value="1"/>
</dbReference>
<dbReference type="PANTHER" id="PTHR22804:SF41">
    <property type="entry name" value="BREVICAN CORE PROTEIN"/>
    <property type="match status" value="1"/>
</dbReference>
<dbReference type="Pfam" id="PF00008">
    <property type="entry name" value="EGF"/>
    <property type="match status" value="1"/>
</dbReference>
<dbReference type="Pfam" id="PF00059">
    <property type="entry name" value="Lectin_C"/>
    <property type="match status" value="1"/>
</dbReference>
<dbReference type="Pfam" id="PF00084">
    <property type="entry name" value="Sushi"/>
    <property type="match status" value="1"/>
</dbReference>
<dbReference type="Pfam" id="PF07686">
    <property type="entry name" value="V-set"/>
    <property type="match status" value="1"/>
</dbReference>
<dbReference type="Pfam" id="PF00193">
    <property type="entry name" value="Xlink"/>
    <property type="match status" value="2"/>
</dbReference>
<dbReference type="PRINTS" id="PR01265">
    <property type="entry name" value="LINKMODULE"/>
</dbReference>
<dbReference type="SMART" id="SM00032">
    <property type="entry name" value="CCP"/>
    <property type="match status" value="1"/>
</dbReference>
<dbReference type="SMART" id="SM00034">
    <property type="entry name" value="CLECT"/>
    <property type="match status" value="1"/>
</dbReference>
<dbReference type="SMART" id="SM00181">
    <property type="entry name" value="EGF"/>
    <property type="match status" value="1"/>
</dbReference>
<dbReference type="SMART" id="SM00409">
    <property type="entry name" value="IG"/>
    <property type="match status" value="1"/>
</dbReference>
<dbReference type="SMART" id="SM00406">
    <property type="entry name" value="IGv"/>
    <property type="match status" value="1"/>
</dbReference>
<dbReference type="SMART" id="SM00445">
    <property type="entry name" value="LINK"/>
    <property type="match status" value="2"/>
</dbReference>
<dbReference type="SUPFAM" id="SSF56436">
    <property type="entry name" value="C-type lectin-like"/>
    <property type="match status" value="3"/>
</dbReference>
<dbReference type="SUPFAM" id="SSF57535">
    <property type="entry name" value="Complement control module/SCR domain"/>
    <property type="match status" value="1"/>
</dbReference>
<dbReference type="SUPFAM" id="SSF48726">
    <property type="entry name" value="Immunoglobulin"/>
    <property type="match status" value="1"/>
</dbReference>
<dbReference type="PROSITE" id="PS00615">
    <property type="entry name" value="C_TYPE_LECTIN_1"/>
    <property type="match status" value="1"/>
</dbReference>
<dbReference type="PROSITE" id="PS50041">
    <property type="entry name" value="C_TYPE_LECTIN_2"/>
    <property type="match status" value="1"/>
</dbReference>
<dbReference type="PROSITE" id="PS00022">
    <property type="entry name" value="EGF_1"/>
    <property type="match status" value="1"/>
</dbReference>
<dbReference type="PROSITE" id="PS01186">
    <property type="entry name" value="EGF_2"/>
    <property type="match status" value="1"/>
</dbReference>
<dbReference type="PROSITE" id="PS50026">
    <property type="entry name" value="EGF_3"/>
    <property type="match status" value="1"/>
</dbReference>
<dbReference type="PROSITE" id="PS50835">
    <property type="entry name" value="IG_LIKE"/>
    <property type="match status" value="1"/>
</dbReference>
<dbReference type="PROSITE" id="PS00290">
    <property type="entry name" value="IG_MHC"/>
    <property type="match status" value="1"/>
</dbReference>
<dbReference type="PROSITE" id="PS01241">
    <property type="entry name" value="LINK_1"/>
    <property type="match status" value="2"/>
</dbReference>
<dbReference type="PROSITE" id="PS50963">
    <property type="entry name" value="LINK_2"/>
    <property type="match status" value="2"/>
</dbReference>
<dbReference type="PROSITE" id="PS50923">
    <property type="entry name" value="SUSHI"/>
    <property type="match status" value="1"/>
</dbReference>
<organism>
    <name type="scientific">Homo sapiens</name>
    <name type="common">Human</name>
    <dbReference type="NCBI Taxonomy" id="9606"/>
    <lineage>
        <taxon>Eukaryota</taxon>
        <taxon>Metazoa</taxon>
        <taxon>Chordata</taxon>
        <taxon>Craniata</taxon>
        <taxon>Vertebrata</taxon>
        <taxon>Euteleostomi</taxon>
        <taxon>Mammalia</taxon>
        <taxon>Eutheria</taxon>
        <taxon>Euarchontoglires</taxon>
        <taxon>Primates</taxon>
        <taxon>Haplorrhini</taxon>
        <taxon>Catarrhini</taxon>
        <taxon>Hominidae</taxon>
        <taxon>Homo</taxon>
    </lineage>
</organism>
<proteinExistence type="evidence at protein level"/>
<accession>Q96GW7</accession>
<accession>D3DVC2</accession>
<accession>Q5SZ10</accession>
<accession>Q5T3I5</accession>
<accession>Q8TBB9</accession>
<accession>Q9HBK1</accession>
<accession>Q9HBK4</accession>
<sequence length="911" mass="99118">MAQLFLPLLAALVLAQAPAALADVLEGDSSEDRAFRVRIAGDAPLQGVLGGALTIPCHVHYLRPPPSRRAVLGSPRVKWTFLSRGREAEVLVARGVRVKVNEAYRFRVALPAYPASLTDVSLALSELRPNDSGIYRCEVQHGIDDSSDAVEVKVKGVVFLYREGSARYAFSFSGAQEACARIGAHIATPEQLYAAYLGGYEQCDAGWLSDQTVRYPIQTPREACYGDMDGFPGVRNYGVVDPDDLYDVYCYAEDLNGELFLGDPPEKLTLEEARAYCQERGAEIATTGQLYAAWDGGLDHCSPGWLADGSVRYPIVTPSQRCGGGLPGVKTLFLFPNQTGFPNKHSRFNVYCFRDSAQPSAIPEASNPASNPASDGLEAIVTVTETLEELQLPQEATESESRGAIYSIPIMEDGGGGSSTPEDPAEAPRTLLEFETQSMVPPTGFSEEEGKALEEEEKYEDEEEKEEEEEEEEVEDEALWAWPSELSSPGPEASLPTEPAAQEESLSQAPARAVLQPGASPLPDGESEASRPPRVHGPPTETLPTPRERNLASPSPSTLVEAREVGEATGGPELSGVPRGESEETGSSEGAPSLLPATRAPEGTRELEAPSEDNSGRTAPAGTSVQAQPVLPTDSASRGGVAVVPASGDCVPSPCHNGGTCLEEEEGVRCLCLPGYGGDLCDVGLRFCNPGWDAFQGACYKHFSTRRSWEEAETQCRMYGAHLASISTPEEQDFINNRYREYQWIGLNDRTIEGDFLWSDGVPLLYENWNPGQPDSYFLSGENCVVMVWHDQGQWSDVPCNYHLSYTCKMGLVSCGPPPELPLAQVFGRPRLRYEVDTVLRYRCREGLAQRNLPLIRCQENGRWEAPQISCVPRRPARALHPEEDPEGRQGRLLGRWKALLIPPSSPMPGP</sequence>
<feature type="signal peptide" evidence="3">
    <location>
        <begin position="1"/>
        <end position="22"/>
    </location>
</feature>
<feature type="chain" id="PRO_0000017511" description="Brevican core protein">
    <location>
        <begin position="23"/>
        <end position="911"/>
    </location>
</feature>
<feature type="domain" description="Ig-like V-type">
    <location>
        <begin position="36"/>
        <end position="155"/>
    </location>
</feature>
<feature type="domain" description="Link 1" evidence="7">
    <location>
        <begin position="157"/>
        <end position="252"/>
    </location>
</feature>
<feature type="domain" description="Link 2" evidence="7">
    <location>
        <begin position="257"/>
        <end position="354"/>
    </location>
</feature>
<feature type="domain" description="EGF-like" evidence="5">
    <location>
        <begin position="646"/>
        <end position="682"/>
    </location>
</feature>
<feature type="domain" description="C-type lectin" evidence="4">
    <location>
        <begin position="695"/>
        <end position="809"/>
    </location>
</feature>
<feature type="domain" description="Sushi" evidence="6">
    <location>
        <begin position="813"/>
        <end position="873"/>
    </location>
</feature>
<feature type="region of interest" description="Disordered" evidence="8">
    <location>
        <begin position="391"/>
        <end position="641"/>
    </location>
</feature>
<feature type="region of interest" description="O-glycosylated at two sites">
    <location>
        <begin position="520"/>
        <end position="530"/>
    </location>
</feature>
<feature type="region of interest" description="O-glycosylated at two sites">
    <location>
        <begin position="540"/>
        <end position="545"/>
    </location>
</feature>
<feature type="region of interest" description="O-glycosylated at one site">
    <location>
        <begin position="569"/>
        <end position="575"/>
    </location>
</feature>
<feature type="compositionally biased region" description="Acidic residues" evidence="8">
    <location>
        <begin position="454"/>
        <end position="478"/>
    </location>
</feature>
<feature type="compositionally biased region" description="Polar residues" evidence="8">
    <location>
        <begin position="612"/>
        <end position="627"/>
    </location>
</feature>
<feature type="modified residue" description="Phosphoserine" evidence="2">
    <location>
        <position position="418"/>
    </location>
</feature>
<feature type="glycosylation site" description="N-linked (GlcNAc...) asparagine" evidence="3">
    <location>
        <position position="130"/>
    </location>
</feature>
<feature type="glycosylation site" description="N-linked (GlcNAc...) asparagine" evidence="3">
    <location>
        <position position="337"/>
    </location>
</feature>
<feature type="glycosylation site" description="O-linked (Xyl...) (chondroitin sulfate) serine" evidence="12 14">
    <location>
        <position position="418"/>
    </location>
</feature>
<feature type="glycosylation site" description="O-linked (GalNAc...) serine" evidence="17">
    <location>
        <position position="905"/>
    </location>
</feature>
<feature type="glycosylation site" description="O-linked (GalNAc...) serine" evidence="17">
    <location>
        <position position="906"/>
    </location>
</feature>
<feature type="disulfide bond" evidence="1">
    <location>
        <begin position="57"/>
        <end position="137"/>
    </location>
</feature>
<feature type="disulfide bond" evidence="1">
    <location>
        <begin position="179"/>
        <end position="250"/>
    </location>
</feature>
<feature type="disulfide bond" evidence="1">
    <location>
        <begin position="203"/>
        <end position="224"/>
    </location>
</feature>
<feature type="disulfide bond" evidence="1">
    <location>
        <begin position="277"/>
        <end position="352"/>
    </location>
</feature>
<feature type="disulfide bond" evidence="1">
    <location>
        <begin position="301"/>
        <end position="322"/>
    </location>
</feature>
<feature type="disulfide bond" evidence="1">
    <location>
        <begin position="650"/>
        <end position="661"/>
    </location>
</feature>
<feature type="disulfide bond" evidence="1">
    <location>
        <begin position="655"/>
        <end position="670"/>
    </location>
</feature>
<feature type="disulfide bond" evidence="1">
    <location>
        <begin position="672"/>
        <end position="681"/>
    </location>
</feature>
<feature type="disulfide bond" evidence="1">
    <location>
        <begin position="688"/>
        <end position="699"/>
    </location>
</feature>
<feature type="disulfide bond" evidence="1">
    <location>
        <begin position="716"/>
        <end position="808"/>
    </location>
</feature>
<feature type="disulfide bond" evidence="1">
    <location>
        <begin position="784"/>
        <end position="800"/>
    </location>
</feature>
<feature type="disulfide bond" evidence="1">
    <location>
        <begin position="815"/>
        <end position="858"/>
    </location>
</feature>
<feature type="disulfide bond" evidence="1">
    <location>
        <begin position="844"/>
        <end position="871"/>
    </location>
</feature>
<feature type="splice variant" id="VSP_011184" description="In isoform 2." evidence="15">
    <original>DCVPSPCHNGGTCLEEEEGVRCL</original>
    <variation>NSAQGSTALSILLLFFPLQLWVT</variation>
    <location>
        <begin position="649"/>
        <end position="671"/>
    </location>
</feature>
<feature type="splice variant" id="VSP_011185" description="In isoform 2." evidence="15">
    <location>
        <begin position="672"/>
        <end position="911"/>
    </location>
</feature>
<feature type="sequence variant" id="VAR_050123" description="In dbSNP:rs12065791.">
    <original>S</original>
    <variation>L</variation>
    <location>
        <position position="356"/>
    </location>
</feature>
<feature type="sequence variant" id="VAR_019551" description="In dbSNP:rs1056695." evidence="10">
    <original>E</original>
    <variation>K</variation>
    <location>
        <position position="504"/>
    </location>
</feature>
<feature type="sequence conflict" description="In Ref. 5; AAH22938." evidence="16" ref="5">
    <original>A</original>
    <variation>T</variation>
    <location>
        <position position="175"/>
    </location>
</feature>
<feature type="lipid moiety-binding region" description="GPI-anchor amidated alanine" evidence="3">
    <location sequence="Q96GW7-2">
        <position position="646"/>
    </location>
</feature>
<comment type="function">
    <text>May play a role in the terminally differentiating and the adult nervous system during postnatal development. Could stabilize interactions between hyaluronan (HA) and brain proteoglycans.</text>
</comment>
<comment type="subunit">
    <text evidence="1">Interacts with TNR.</text>
</comment>
<comment type="interaction">
    <interactant intactId="EBI-2690445">
        <id>Q96GW7</id>
    </interactant>
    <interactant intactId="EBI-25646567">
        <id>Q06481-5</id>
        <label>APLP2</label>
    </interactant>
    <organismsDiffer>false</organismsDiffer>
    <experiments>3</experiments>
</comment>
<comment type="interaction">
    <interactant intactId="EBI-2690445">
        <id>Q96GW7</id>
    </interactant>
    <interactant intactId="EBI-77613">
        <id>P05067</id>
        <label>APP</label>
    </interactant>
    <organismsDiffer>false</organismsDiffer>
    <experiments>3</experiments>
</comment>
<comment type="interaction">
    <interactant intactId="EBI-2690445">
        <id>Q96GW7</id>
    </interactant>
    <interactant intactId="EBI-9087876">
        <id>P48730-2</id>
        <label>CSNK1D</label>
    </interactant>
    <organismsDiffer>false</organismsDiffer>
    <experiments>3</experiments>
</comment>
<comment type="interaction">
    <interactant intactId="EBI-2690445">
        <id>Q96GW7</id>
    </interactant>
    <interactant intactId="EBI-79452">
        <id>P07948</id>
        <label>LYN</label>
    </interactant>
    <organismsDiffer>false</organismsDiffer>
    <experiments>3</experiments>
</comment>
<comment type="subcellular location">
    <subcellularLocation>
        <location evidence="12 14">Secreted</location>
    </subcellularLocation>
</comment>
<comment type="subcellular location">
    <molecule>Isoform 1</molecule>
    <subcellularLocation>
        <location>Secreted</location>
        <location>Extracellular space</location>
        <location>Extracellular matrix</location>
    </subcellularLocation>
</comment>
<comment type="subcellular location">
    <molecule>Isoform 2</molecule>
    <subcellularLocation>
        <location>Membrane</location>
        <topology>Lipid-anchor</topology>
        <topology>GPI-anchor</topology>
    </subcellularLocation>
</comment>
<comment type="alternative products">
    <event type="alternative splicing"/>
    <isoform>
        <id>Q96GW7-1</id>
        <name>1</name>
        <sequence type="displayed"/>
    </isoform>
    <isoform>
        <id>Q96GW7-2</id>
        <name>2</name>
        <sequence type="described" ref="VSP_011184 VSP_011185"/>
    </isoform>
</comment>
<comment type="tissue specificity">
    <text evidence="12 13 14">Expressed in the retina, specifically in the inner nuclear layer, inner plexiform layer and ganglion cell layer (at protein level) (PubMed:29777959). Detected in cerebrospinal fluid (at protein level) (PubMed:25326458). Detected in urine (at protein level) (PubMed:37453717).</text>
</comment>
<comment type="developmental stage">
    <text evidence="9 13">Expressed between 6 and 19 weeks post-conception (WPC) in the outer neuroblastic zone, inner neuroblastic zone, and inner plexiform layer of the retina (at protein level) (PubMed:29777959). Expressed at the surface ectoderm at 6 WPC and the neural retinal at 6 to 8 WPC (at protein level) (PubMed:29777959). Expressed in the interphotoreceptor matrix and abundantly in developing photoreceptors between 12 and 19 WPC (at protein level) (PubMed:29777959). Isoform 1: Highly expressed from birth through 8 years of age and is down-regulated by 20 years of age to low levels that are maintained in the normal adult cortex (PubMed:11054543). Isoform 2: Expressed at uniformly low levels throughout development (PubMed:11054543).</text>
</comment>
<comment type="PTM">
    <text evidence="11 12">O-glycosylated; contains chondroitin sulfate (PubMed:25326458). O-glycosylated with a core 1 or possibly core 8 glycan (PubMed:19838169).</text>
</comment>
<comment type="similarity">
    <text evidence="16">Belongs to the aggrecan/versican proteoglycan family.</text>
</comment>
<comment type="online information" name="Functional Glycomics Gateway - Glycan Binding">
    <link uri="http://www.functionalglycomics.org/glycomics/GBPServlet?&amp;operationType=view&amp;cbpId=cbp_hum_Ctlect_212"/>
    <text>Brevican</text>
</comment>
<gene>
    <name type="primary">BCAN</name>
    <name type="synonym">BEHAB</name>
    <name type="synonym">CSPG7</name>
    <name type="ORF">UNQ2525/PRO6018</name>
</gene>
<name>PGCB_HUMAN</name>
<keyword id="KW-0025">Alternative splicing</keyword>
<keyword id="KW-1015">Disulfide bond</keyword>
<keyword id="KW-0245">EGF-like domain</keyword>
<keyword id="KW-0272">Extracellular matrix</keyword>
<keyword id="KW-0325">Glycoprotein</keyword>
<keyword id="KW-0336">GPI-anchor</keyword>
<keyword id="KW-0373">Hyaluronic acid</keyword>
<keyword id="KW-0393">Immunoglobulin domain</keyword>
<keyword id="KW-0430">Lectin</keyword>
<keyword id="KW-0449">Lipoprotein</keyword>
<keyword id="KW-0472">Membrane</keyword>
<keyword id="KW-0597">Phosphoprotein</keyword>
<keyword id="KW-0654">Proteoglycan</keyword>
<keyword id="KW-1267">Proteomics identification</keyword>
<keyword id="KW-1185">Reference proteome</keyword>
<keyword id="KW-0677">Repeat</keyword>
<keyword id="KW-0964">Secreted</keyword>
<keyword id="KW-0732">Signal</keyword>
<keyword id="KW-0768">Sushi</keyword>
<protein>
    <recommendedName>
        <fullName>Brevican core protein</fullName>
    </recommendedName>
    <alternativeName>
        <fullName>Brain-enriched hyaluronan-binding protein</fullName>
        <shortName>BEHAB</shortName>
    </alternativeName>
    <alternativeName>
        <fullName>Chondroitin sulfate proteoglycan 7</fullName>
    </alternativeName>
</protein>